<comment type="function">
    <text evidence="5 6 7 8 9">Serine/threonine-protein kinase required in the somatic gonadal cells to regulate germline proliferation during larval development and in adulthood (PubMed:23904186). Plays a role in the development/differentiation of gonadal distal tip cells (PubMed:23904186). Required for normal lifespan in a pha-4 and mxl-2-dependent manner (PubMed:26791749, PubMed:29036198, PubMed:36173858). Also contributes to survival following heat or oxidative stress (PubMed:26791749). Prevents sumoylation and inactivation of heat shock transcription factor hsf-1 which enhances hsf-1-dependent transcriptional induction of chaperones in response to heat shock (PubMed:29036198). Also required for hormetic extension of longevity in response to heat stress (PubMed:29036198). Also contributes to longevity by promoting autophagy under nutrient stress conditions through induction of autophagosome formation and autophagy gene expression (PubMed:29036198). Provides protection against proteotoxic polyglutamine aggregate and the associated locomotory toxicity, probably as a result of kinase activity (PubMed:29036198, PubMed:37338980). Contributes to longevity via gamma-aminobutyric acid (GABA)ergic signaling by promoting autophagy through mxl-2, hlh-30 and daf-16 but independent of hsf-1 and phas-4, to induce autophagosome formation and the expression of autophagy genes (PubMed:37338980). Promotes thermotolerance via serotonergic signaling by serotonergic neurons (PubMed:37338980). Preserves neuronal function in aging animals by mitigating against age-associated decline in axonal and synaptic transmissions (PubMed:37338980). Acts as an activator of nhr-49-dependent hypoxia response, including the up-regulation of fmo-2 and acs-2, the induction of autophagosome formation and expression of autophagy genes (PubMed:35285794).</text>
</comment>
<comment type="catalytic activity">
    <reaction evidence="1">
        <text>L-seryl-[protein] + ATP = O-phospho-L-seryl-[protein] + ADP + H(+)</text>
        <dbReference type="Rhea" id="RHEA:17989"/>
        <dbReference type="Rhea" id="RHEA-COMP:9863"/>
        <dbReference type="Rhea" id="RHEA-COMP:11604"/>
        <dbReference type="ChEBI" id="CHEBI:15378"/>
        <dbReference type="ChEBI" id="CHEBI:29999"/>
        <dbReference type="ChEBI" id="CHEBI:30616"/>
        <dbReference type="ChEBI" id="CHEBI:83421"/>
        <dbReference type="ChEBI" id="CHEBI:456216"/>
        <dbReference type="EC" id="2.7.11.1"/>
    </reaction>
</comment>
<comment type="catalytic activity">
    <reaction evidence="1">
        <text>L-threonyl-[protein] + ATP = O-phospho-L-threonyl-[protein] + ADP + H(+)</text>
        <dbReference type="Rhea" id="RHEA:46608"/>
        <dbReference type="Rhea" id="RHEA-COMP:11060"/>
        <dbReference type="Rhea" id="RHEA-COMP:11605"/>
        <dbReference type="ChEBI" id="CHEBI:15378"/>
        <dbReference type="ChEBI" id="CHEBI:30013"/>
        <dbReference type="ChEBI" id="CHEBI:30616"/>
        <dbReference type="ChEBI" id="CHEBI:61977"/>
        <dbReference type="ChEBI" id="CHEBI:456216"/>
        <dbReference type="EC" id="2.7.11.1"/>
    </reaction>
</comment>
<comment type="subcellular location">
    <subcellularLocation>
        <location evidence="4 5 7">Nucleus</location>
    </subcellularLocation>
    <text evidence="4 5">Localizes to nuclear moving puncta. Puncta number and intensity decrease in the adult (PubMed:12618396). In some large cells, a nuclear speckle pattern can be detected (PubMed:23904186).</text>
</comment>
<comment type="alternative products">
    <event type="alternative splicing"/>
    <isoform>
        <id>Q8MQ70-1</id>
        <name evidence="14">b</name>
        <sequence type="displayed"/>
    </isoform>
    <isoform>
        <id>Q8MQ70-2</id>
        <name evidence="13">a</name>
        <sequence type="described" ref="VSP_057642"/>
    </isoform>
    <isoform>
        <id>Q8MQ70-3</id>
        <name evidence="15">c</name>
        <sequence type="described" ref="VSP_057641"/>
    </isoform>
</comment>
<comment type="tissue specificity">
    <text evidence="4 5 7 9">Broadly expressed during embryogenesis (PubMed:12618396, PubMed:29036198). Expression becomes more restricted during larval development (PubMed:29036198). L3 larvae display robust expression in many head and motor neurons, and lower levels of expression in the intestine and the seam cells of the hypodermis (PubMed:29036198). By late L4 stage, expression is largely restricted to neurons and is maintained in nerve cells of the head and nerve cord during adulthood (PubMed:29036198). Expressed in adult pharyngeal cells, hypodermal cells, gonadal sheath cells and distal tip cells but not in germline cells (PubMed:23904186). Expressed in serotonergic neurons such as ADF and NSM and in GABAergic neurons, including RME, RIS and DVB (PubMed:37338980).</text>
</comment>
<comment type="induction">
    <text evidence="5 6 7 9">Induced by heat stress (PubMed:23904186, PubMed:26791749, PubMed:29036198). Transcription from the hpk-1 promoter is not altered by heat shock treatment, suggesting that heat shock affects hpk-1 levels through a post-transcriptional mechanism (PubMed:26791749). Induction is greatest in hypodermal seam cells and neurons with much lower levels of induction in intestinal cells (PubMed:29036198). Induced in the neurons during normal aging with significant up-regulation in older animals (PubMed:37338980).</text>
</comment>
<comment type="disruption phenotype">
    <text evidence="5 6 7 8 9">Enhanced sensitivity to heat and oxidative stress with reduced survival under both conditions (PubMed:26791749, PubMed:29036198). Following exposure to gamma irradiation, no effect on DNA damage response in the germline but significantly reduced embryonic survival (PubMed:26791749). Suppresses hypoxia-dependent expression of nhr-49 in the head, intestine and hypodermal seam cells (PubMed:35285794). Significantly reduces lifespan with a rapid decline in body bend movement and pharyngeal pumping, indicative of accelerated aging (PubMed:26791749, PubMed:29036198, PubMed:37338980). Premature accumulation of polyglutamine aggregates and increased polyglutamine-associated paralysis at day 8 of adulthood (PubMed:29036198, PubMed:37338980). Displays significantly higher age-associated neurodegeneration, including axonal breaks, in both ventral and dorsal motor neurons (PubMed:37338980). Exhibits reduced cholinergic synaptic transmission (PubMed:37338980). In response to hypoxia, 45% of embryos develop to the L4 larval stage by 24 hours; 26% exhibit similar development in an nhr-49 mutant background, and only 2% in a hif-1 mutant background (PubMed:35285794). RNAi-mediated knockdown reduces the hypoxia-dependent intestinal expression of fmo-2 and acs-2 (PubMed:35285794). RNAi-mediated knockdown results in small and underdeveloped germlines with a reduction in the number of cells in G2/M stages (PubMed:23904186). RNAi-mediated knockdown from the L1 larval stage onwards results in shortened lifespan while RNAi-mediated knockdown initiated at the L4 larval stage decreases lifespan to a smaller but significant extent (PubMed:29036198, PubMed:36173858). RNAi-mediated knockdown in the intestine, hypodermis or neurons reduces lifespan while RNAi-mediated knockdown in muscle cells does not (PubMed:29036198). RNAi-mediated knockdown decreases body bends in liquids and increases proteotoxic polyglutamine aggregates (PubMed:37338980).</text>
</comment>
<comment type="similarity">
    <text evidence="10">Belongs to the protein kinase superfamily. CMGC Ser/Thr protein kinase family. HIPK subfamily.</text>
</comment>
<organism>
    <name type="scientific">Caenorhabditis elegans</name>
    <dbReference type="NCBI Taxonomy" id="6239"/>
    <lineage>
        <taxon>Eukaryota</taxon>
        <taxon>Metazoa</taxon>
        <taxon>Ecdysozoa</taxon>
        <taxon>Nematoda</taxon>
        <taxon>Chromadorea</taxon>
        <taxon>Rhabditida</taxon>
        <taxon>Rhabditina</taxon>
        <taxon>Rhabditomorpha</taxon>
        <taxon>Rhabditoidea</taxon>
        <taxon>Rhabditidae</taxon>
        <taxon>Peloderinae</taxon>
        <taxon>Caenorhabditis</taxon>
    </lineage>
</organism>
<name>HIPK_CAEEL</name>
<reference evidence="12" key="1">
    <citation type="journal article" date="1998" name="Science">
        <title>Genome sequence of the nematode C. elegans: a platform for investigating biology.</title>
        <authorList>
            <consortium name="The C. elegans sequencing consortium"/>
        </authorList>
    </citation>
    <scope>NUCLEOTIDE SEQUENCE [LARGE SCALE GENOMIC DNA]</scope>
    <scope>ALTERNATIVE SPLICING</scope>
    <source>
        <strain evidence="12">Bristol N2</strain>
    </source>
</reference>
<reference evidence="10" key="2">
    <citation type="journal article" date="2003" name="Genetics">
        <title>Characterization of Caenorhabditis elegans homologs of the Down syndrome candidate gene DYRK1A.</title>
        <authorList>
            <person name="Raich W.B."/>
            <person name="Moorman C."/>
            <person name="Lacefield C.O."/>
            <person name="Lehrer J."/>
            <person name="Bartsch D."/>
            <person name="Plasterk R.H."/>
            <person name="Kandel E.R."/>
            <person name="Hobert O."/>
        </authorList>
    </citation>
    <scope>SUBCELLULAR LOCATION</scope>
    <scope>TISSUE SPECIFICITY</scope>
</reference>
<reference evidence="10" key="3">
    <citation type="journal article" date="2013" name="Dev. Dyn.">
        <title>Homeodomain interacting protein kinase (HPK-1) is required in the soma for robust germline proliferation in C. elegans.</title>
        <authorList>
            <person name="Berber S."/>
            <person name="Llamosas E."/>
            <person name="Thaivalappil P."/>
            <person name="Boag P.R."/>
            <person name="Crossley M."/>
            <person name="Nicholas H.R."/>
        </authorList>
    </citation>
    <scope>FUNCTION</scope>
    <scope>SUBCELLULAR LOCATION</scope>
    <scope>TISSUE SPECIFICITY</scope>
    <scope>INDUCTION</scope>
    <scope>DISRUPTION PHENOTYPE</scope>
</reference>
<reference key="4">
    <citation type="journal article" date="2016" name="Sci. Rep.">
        <title>Homeodomain-Interacting Protein Kinase (HPK-1) regulates stress responses and ageing in C. elegans.</title>
        <authorList>
            <person name="Berber S."/>
            <person name="Wood M."/>
            <person name="Llamosas E."/>
            <person name="Thaivalappil P."/>
            <person name="Lee K."/>
            <person name="Liao B.M."/>
            <person name="Chew Y.L."/>
            <person name="Rhodes A."/>
            <person name="Yucel D."/>
            <person name="Crossley M."/>
            <person name="Nicholas H.R."/>
        </authorList>
    </citation>
    <scope>FUNCTION</scope>
    <scope>INDUCTION</scope>
    <scope>DISRUPTION PHENOTYPE</scope>
</reference>
<reference key="5">
    <citation type="journal article" date="2017" name="PLoS Genet.">
        <title>The homeodomain-interacting protein kinase HPK-1 preserves protein homeostasis and longevity through master regulatory control of the HSF-1 chaperone network and TORC1-restricted autophagy in Caenorhabditis elegans.</title>
        <authorList>
            <person name="Das R."/>
            <person name="Melo J.A."/>
            <person name="Thondamal M."/>
            <person name="Morton E.A."/>
            <person name="Cornwell A.B."/>
            <person name="Crick B."/>
            <person name="Kim J.H."/>
            <person name="Swartz E.W."/>
            <person name="Lamitina T."/>
            <person name="Douglas P.M."/>
            <person name="Samuelson A.V."/>
        </authorList>
    </citation>
    <scope>FUNCTION</scope>
    <scope>SUBCELLULAR LOCATION</scope>
    <scope>TISSUE SPECIFICITY</scope>
    <scope>INDUCTION</scope>
    <scope>DISRUPTION PHENOTYPE</scope>
</reference>
<reference evidence="10" key="6">
    <citation type="journal article" date="2022" name="Elife">
        <title>Nuclear hormone receptor NHR-49 acts in parallel with HIF-1 to promote hypoxia adaptation in Caenorhabditis elegans.</title>
        <authorList>
            <person name="Doering K.R.S."/>
            <person name="Cheng X."/>
            <person name="Milburn L."/>
            <person name="Ratnappan R."/>
            <person name="Ghazi A."/>
            <person name="Miller D.L."/>
            <person name="Taubert S."/>
        </authorList>
    </citation>
    <scope>FUNCTION</scope>
    <scope>DISRUPTION PHENOTYPE</scope>
</reference>
<reference evidence="10" key="7">
    <citation type="journal article" date="2022" name="Science">
        <title>Sex- and age-dependent genetics of longevity in a heterogeneous mouse population.</title>
        <authorList>
            <person name="Bou Sleiman M."/>
            <person name="Roy S."/>
            <person name="Gao A.W."/>
            <person name="Sadler M.C."/>
            <person name="von Alvensleben G.V.G."/>
            <person name="Li H."/>
            <person name="Sen S."/>
            <person name="Harrison D.E."/>
            <person name="Nelson J.F."/>
            <person name="Strong R."/>
            <person name="Miller R.A."/>
            <person name="Kutalik Z."/>
            <person name="Williams R.W."/>
            <person name="Auwerx J."/>
        </authorList>
    </citation>
    <scope>FUNCTION</scope>
    <scope>DISRUPTION PHENOTYPE</scope>
</reference>
<reference evidence="10" key="8">
    <citation type="journal article" date="2023" name="Elife">
        <title>Homeodomain-interacting protein kinase maintains neuronal homeostasis during normal Caenorhabditis elegans aging and systemically regulates longevity from serotonergic and GABAergic neurons.</title>
        <authorList>
            <person name="Lazaro-Pena M.I."/>
            <person name="Cornwell A.B."/>
            <person name="Diaz-Balzac C.A."/>
            <person name="Das R."/>
            <person name="Ward Z.C."/>
            <person name="Macoretta N."/>
            <person name="Thakar J."/>
            <person name="Samuelson A.V."/>
        </authorList>
    </citation>
    <scope>FUNCTION</scope>
    <scope>TISSUE SPECIFICITY</scope>
    <scope>INDUCTION</scope>
    <scope>DISRUPTION PHENOTYPE</scope>
    <scope>MUTAGENESIS OF LYS-176 AND ASP-272</scope>
</reference>
<feature type="chain" id="PRO_0000432999" description="Homeodomain-interacting protein kinase 1">
    <location>
        <begin position="1"/>
        <end position="846"/>
    </location>
</feature>
<feature type="domain" description="Protein kinase" evidence="2">
    <location>
        <begin position="147"/>
        <end position="483"/>
    </location>
</feature>
<feature type="region of interest" description="Disordered" evidence="3">
    <location>
        <begin position="47"/>
        <end position="74"/>
    </location>
</feature>
<feature type="region of interest" description="Disordered" evidence="3">
    <location>
        <begin position="741"/>
        <end position="790"/>
    </location>
</feature>
<feature type="compositionally biased region" description="Basic and acidic residues" evidence="3">
    <location>
        <begin position="61"/>
        <end position="72"/>
    </location>
</feature>
<feature type="compositionally biased region" description="Polar residues" evidence="3">
    <location>
        <begin position="746"/>
        <end position="757"/>
    </location>
</feature>
<feature type="compositionally biased region" description="Low complexity" evidence="3">
    <location>
        <begin position="764"/>
        <end position="773"/>
    </location>
</feature>
<feature type="active site" description="Proton acceptor" evidence="2">
    <location>
        <position position="272"/>
    </location>
</feature>
<feature type="binding site" evidence="2">
    <location>
        <begin position="153"/>
        <end position="161"/>
    </location>
    <ligand>
        <name>ATP</name>
        <dbReference type="ChEBI" id="CHEBI:30616"/>
    </ligand>
</feature>
<feature type="binding site" evidence="2">
    <location>
        <position position="176"/>
    </location>
    <ligand>
        <name>ATP</name>
        <dbReference type="ChEBI" id="CHEBI:30616"/>
    </ligand>
</feature>
<feature type="splice variant" id="VSP_057641" description="In isoform c." evidence="10">
    <location>
        <begin position="1"/>
        <end position="106"/>
    </location>
</feature>
<feature type="splice variant" id="VSP_057642" description="In isoform a." evidence="10">
    <original>MPKRKNSGQSTDLNSRSPKTIDEALRILAPPQALLVQSQLNLTAPANPFSIQ</original>
    <variation>MNFHFTLDNDRKRRRSLSIDIDINFND</variation>
    <location>
        <begin position="1"/>
        <end position="52"/>
    </location>
</feature>
<feature type="mutagenesis site" description="Neuronal expression does not improve proteostasis or rescue polyglutamine foci accumulation and paralysis in the muscle cells of mutant animals." evidence="9">
    <original>K</original>
    <variation>A</variation>
    <location>
        <position position="176"/>
    </location>
</feature>
<feature type="mutagenesis site" description="Neuronal expression does not improve proteostasis or rescue polyglutamine foci accumulation and paralysis in the muscle cells of mutant animals." evidence="9">
    <original>D</original>
    <variation>N</variation>
    <location>
        <position position="272"/>
    </location>
</feature>
<keyword id="KW-0025">Alternative splicing</keyword>
<keyword id="KW-0067">ATP-binding</keyword>
<keyword id="KW-0072">Autophagy</keyword>
<keyword id="KW-0217">Developmental protein</keyword>
<keyword id="KW-0418">Kinase</keyword>
<keyword id="KW-0547">Nucleotide-binding</keyword>
<keyword id="KW-0539">Nucleus</keyword>
<keyword id="KW-1185">Reference proteome</keyword>
<keyword id="KW-0723">Serine/threonine-protein kinase</keyword>
<keyword id="KW-0808">Transferase</keyword>
<accession>Q8MQ70</accession>
<accession>Q19632</accession>
<accession>Q8MQ69</accession>
<sequence>MPKRKNSGQSTDLNSRSPKTIDEALRILAPPQALLVQSQLNLTAPANPFSIQKAPGTSSDNEQRAPKRRADEEAVNAVPKNLLTTSSTFARAVIPAAPAISSANNKMAPQSVTATAKTTTNRGKVSGEGEYQLIKNEVLCSPYGNQYEVLEFLGKGTFGQVVKAWKKGTSEIVAIKILKKHPSYARQGQIEVSILSRLSNENSEEFNFVRAFECFNHKSHTCLVFEMLEQNLYDFLKQNKFMPLPLNAIRPILFQVLTALLKLKSLGLIHADLKPENIMLVDPQQQPYRVKVIDFGSASHRSKAVTNTYLQSRYYRAPEIILGLPFNESIDMWSLGCVIAELFLGWPLYPGSSEYDQIRFIIQTQGLPPTSMLESASKLHRFFKEVKSESPNHTNVGGSYYRLKTVEEYEASSSTAKSKETRKYIFNVIDDISRVCYGFESDPVEHLCDRIDRQEFVDVLKKMLVLNPDFRITPAEGLESKFVTMTHINGYNFANYVHEAHKRMEICRKPGPAMATPYRAANVATPITPVEKPPAPKLQQPMIAVLPQLNQIAATNIPPVPTQPDLTNLMHHYSQMAAATGSAATAAQFFYQPLPPAPLFQYAQLHHPFAARPPHFLSLATPSHMVPQFVPVPIMDPSMLQGQWPPGAAQQFAVLANDIMRVPAPQGINQMFASTPQTFSLPQFLSSSIPSATTAFNGNAPNIPFPEENSSWALGTAAQQQQQQAQRAQSMINGNVKVKPLAAQPKKNSPAPSVITLSSDEDSNGAGSSNSGSTTRTGAVNPVRNDTLPMGNTIKTEDILVPPTTFDGQLPNLQYFPGSHLFDPKTVAGLLPNPFLDTSHIPRAFN</sequence>
<protein>
    <recommendedName>
        <fullName evidence="11">Homeodomain-interacting protein kinase 1</fullName>
        <ecNumber evidence="1">2.7.11.1</ecNumber>
    </recommendedName>
</protein>
<evidence type="ECO:0000250" key="1">
    <source>
        <dbReference type="UniProtKB" id="Q86Z02"/>
    </source>
</evidence>
<evidence type="ECO:0000255" key="2">
    <source>
        <dbReference type="PROSITE-ProRule" id="PRU00159"/>
    </source>
</evidence>
<evidence type="ECO:0000256" key="3">
    <source>
        <dbReference type="SAM" id="MobiDB-lite"/>
    </source>
</evidence>
<evidence type="ECO:0000269" key="4">
    <source>
    </source>
</evidence>
<evidence type="ECO:0000269" key="5">
    <source>
    </source>
</evidence>
<evidence type="ECO:0000269" key="6">
    <source>
    </source>
</evidence>
<evidence type="ECO:0000269" key="7">
    <source>
    </source>
</evidence>
<evidence type="ECO:0000269" key="8">
    <source>
    </source>
</evidence>
<evidence type="ECO:0000269" key="9">
    <source>
    </source>
</evidence>
<evidence type="ECO:0000305" key="10"/>
<evidence type="ECO:0000305" key="11">
    <source>
    </source>
</evidence>
<evidence type="ECO:0000312" key="12">
    <source>
        <dbReference type="Proteomes" id="UP000001940"/>
    </source>
</evidence>
<evidence type="ECO:0000312" key="13">
    <source>
        <dbReference type="WormBase" id="F20B6.8a"/>
    </source>
</evidence>
<evidence type="ECO:0000312" key="14">
    <source>
        <dbReference type="WormBase" id="F20B6.8b"/>
    </source>
</evidence>
<evidence type="ECO:0000312" key="15">
    <source>
        <dbReference type="WormBase" id="F20B6.8c"/>
    </source>
</evidence>
<gene>
    <name evidence="14" type="primary">hpk-1</name>
    <name evidence="14" type="ORF">F20B6.8</name>
</gene>
<dbReference type="EC" id="2.7.11.1" evidence="1"/>
<dbReference type="EMBL" id="FO081186">
    <property type="protein sequence ID" value="CCD69762.1"/>
    <property type="molecule type" value="Genomic_DNA"/>
</dbReference>
<dbReference type="EMBL" id="FO081186">
    <property type="protein sequence ID" value="CCD69761.1"/>
    <property type="molecule type" value="Genomic_DNA"/>
</dbReference>
<dbReference type="EMBL" id="FO081186">
    <property type="protein sequence ID" value="CCD69763.1"/>
    <property type="molecule type" value="Genomic_DNA"/>
</dbReference>
<dbReference type="PIR" id="T34232">
    <property type="entry name" value="T34232"/>
</dbReference>
<dbReference type="RefSeq" id="NP_741761.1">
    <molecule id="Q8MQ70-1"/>
    <property type="nucleotide sequence ID" value="NM_171662.10"/>
</dbReference>
<dbReference type="RefSeq" id="NP_741762.1">
    <molecule id="Q8MQ70-2"/>
    <property type="nucleotide sequence ID" value="NM_171663.4"/>
</dbReference>
<dbReference type="RefSeq" id="NP_741763.1">
    <molecule id="Q8MQ70-3"/>
    <property type="nucleotide sequence ID" value="NM_171664.7"/>
</dbReference>
<dbReference type="SMR" id="Q8MQ70"/>
<dbReference type="FunCoup" id="Q8MQ70">
    <property type="interactions" value="295"/>
</dbReference>
<dbReference type="IntAct" id="Q8MQ70">
    <property type="interactions" value="1"/>
</dbReference>
<dbReference type="STRING" id="6239.F20B6.8b.1"/>
<dbReference type="PaxDb" id="6239-F20B6.8b"/>
<dbReference type="PeptideAtlas" id="Q8MQ70"/>
<dbReference type="EnsemblMetazoa" id="F20B6.8a.1">
    <molecule id="Q8MQ70-2"/>
    <property type="protein sequence ID" value="F20B6.8a.1"/>
    <property type="gene ID" value="WBGene00001994"/>
</dbReference>
<dbReference type="EnsemblMetazoa" id="F20B6.8b.1">
    <molecule id="Q8MQ70-1"/>
    <property type="protein sequence ID" value="F20B6.8b.1"/>
    <property type="gene ID" value="WBGene00001994"/>
</dbReference>
<dbReference type="EnsemblMetazoa" id="F20B6.8c.1">
    <molecule id="Q8MQ70-3"/>
    <property type="protein sequence ID" value="F20B6.8c.1"/>
    <property type="gene ID" value="WBGene00001994"/>
</dbReference>
<dbReference type="EnsemblMetazoa" id="F20B6.8c.2">
    <molecule id="Q8MQ70-3"/>
    <property type="protein sequence ID" value="F20B6.8c.2"/>
    <property type="gene ID" value="WBGene00001994"/>
</dbReference>
<dbReference type="EnsemblMetazoa" id="F20B6.8c.3">
    <molecule id="Q8MQ70-3"/>
    <property type="protein sequence ID" value="F20B6.8c.3"/>
    <property type="gene ID" value="WBGene00001994"/>
</dbReference>
<dbReference type="GeneID" id="180695"/>
<dbReference type="KEGG" id="cel:CELE_F20B6.8"/>
<dbReference type="UCSC" id="F20B6.8c.5">
    <property type="organism name" value="c. elegans"/>
</dbReference>
<dbReference type="AGR" id="WB:WBGene00001994"/>
<dbReference type="CTD" id="180695"/>
<dbReference type="WormBase" id="F20B6.8a">
    <molecule id="Q8MQ70-2"/>
    <property type="protein sequence ID" value="CE04430"/>
    <property type="gene ID" value="WBGene00001994"/>
    <property type="gene designation" value="hpk-1"/>
</dbReference>
<dbReference type="WormBase" id="F20B6.8b">
    <molecule id="Q8MQ70-1"/>
    <property type="protein sequence ID" value="CE30961"/>
    <property type="gene ID" value="WBGene00001994"/>
    <property type="gene designation" value="hpk-1"/>
</dbReference>
<dbReference type="WormBase" id="F20B6.8c">
    <molecule id="Q8MQ70-3"/>
    <property type="protein sequence ID" value="CE30962"/>
    <property type="gene ID" value="WBGene00001994"/>
    <property type="gene designation" value="hpk-1"/>
</dbReference>
<dbReference type="eggNOG" id="KOG0667">
    <property type="taxonomic scope" value="Eukaryota"/>
</dbReference>
<dbReference type="GeneTree" id="ENSGT00940000164472"/>
<dbReference type="InParanoid" id="Q8MQ70"/>
<dbReference type="OMA" id="TMTHING"/>
<dbReference type="OrthoDB" id="10030361at2759"/>
<dbReference type="PhylomeDB" id="Q8MQ70"/>
<dbReference type="Reactome" id="R-CEL-3899300">
    <property type="pathway name" value="SUMOylation of transcription cofactors"/>
</dbReference>
<dbReference type="Reactome" id="R-CEL-8939243">
    <property type="pathway name" value="RUNX1 interacts with co-factors whose precise effect on RUNX1 targets is not known"/>
</dbReference>
<dbReference type="PRO" id="PR:Q8MQ70"/>
<dbReference type="Proteomes" id="UP000001940">
    <property type="component" value="Chromosome X"/>
</dbReference>
<dbReference type="Bgee" id="WBGene00001994">
    <property type="expression patterns" value="Expressed in pharyngeal muscle cell (C elegans) and 3 other cell types or tissues"/>
</dbReference>
<dbReference type="GO" id="GO:0005737">
    <property type="term" value="C:cytoplasm"/>
    <property type="evidence" value="ECO:0000318"/>
    <property type="project" value="GO_Central"/>
</dbReference>
<dbReference type="GO" id="GO:0005634">
    <property type="term" value="C:nucleus"/>
    <property type="evidence" value="ECO:0000314"/>
    <property type="project" value="UniProtKB"/>
</dbReference>
<dbReference type="GO" id="GO:0005524">
    <property type="term" value="F:ATP binding"/>
    <property type="evidence" value="ECO:0007669"/>
    <property type="project" value="UniProtKB-KW"/>
</dbReference>
<dbReference type="GO" id="GO:0106310">
    <property type="term" value="F:protein serine kinase activity"/>
    <property type="evidence" value="ECO:0007669"/>
    <property type="project" value="RHEA"/>
</dbReference>
<dbReference type="GO" id="GO:0004674">
    <property type="term" value="F:protein serine/threonine kinase activity"/>
    <property type="evidence" value="ECO:0000318"/>
    <property type="project" value="GO_Central"/>
</dbReference>
<dbReference type="GO" id="GO:0004713">
    <property type="term" value="F:protein tyrosine kinase activity"/>
    <property type="evidence" value="ECO:0000318"/>
    <property type="project" value="GO_Central"/>
</dbReference>
<dbReference type="GO" id="GO:0000045">
    <property type="term" value="P:autophagosome assembly"/>
    <property type="evidence" value="ECO:0000314"/>
    <property type="project" value="UniProtKB"/>
</dbReference>
<dbReference type="GO" id="GO:0008340">
    <property type="term" value="P:determination of adult lifespan"/>
    <property type="evidence" value="ECO:0000315"/>
    <property type="project" value="UniProtKB"/>
</dbReference>
<dbReference type="GO" id="GO:0009408">
    <property type="term" value="P:response to heat"/>
    <property type="evidence" value="ECO:0000315"/>
    <property type="project" value="UniProtKB"/>
</dbReference>
<dbReference type="GO" id="GO:0006979">
    <property type="term" value="P:response to oxidative stress"/>
    <property type="evidence" value="ECO:0000315"/>
    <property type="project" value="WormBase"/>
</dbReference>
<dbReference type="FunFam" id="1.10.510.10:FF:000029">
    <property type="entry name" value="Homeodomain-interacting protein kinase 2 isoform 1"/>
    <property type="match status" value="1"/>
</dbReference>
<dbReference type="Gene3D" id="3.30.200.20">
    <property type="entry name" value="Phosphorylase Kinase, domain 1"/>
    <property type="match status" value="1"/>
</dbReference>
<dbReference type="Gene3D" id="1.10.510.10">
    <property type="entry name" value="Transferase(Phosphotransferase) domain 1"/>
    <property type="match status" value="1"/>
</dbReference>
<dbReference type="InterPro" id="IPR011009">
    <property type="entry name" value="Kinase-like_dom_sf"/>
</dbReference>
<dbReference type="InterPro" id="IPR000719">
    <property type="entry name" value="Prot_kinase_dom"/>
</dbReference>
<dbReference type="InterPro" id="IPR017441">
    <property type="entry name" value="Protein_kinase_ATP_BS"/>
</dbReference>
<dbReference type="InterPro" id="IPR008271">
    <property type="entry name" value="Ser/Thr_kinase_AS"/>
</dbReference>
<dbReference type="InterPro" id="IPR050494">
    <property type="entry name" value="Ser_Thr_dual-spec_kinase"/>
</dbReference>
<dbReference type="PANTHER" id="PTHR24058">
    <property type="entry name" value="DUAL SPECIFICITY PROTEIN KINASE"/>
    <property type="match status" value="1"/>
</dbReference>
<dbReference type="PANTHER" id="PTHR24058:SF17">
    <property type="entry name" value="HOMEODOMAIN INTERACTING PROTEIN KINASE, ISOFORM D"/>
    <property type="match status" value="1"/>
</dbReference>
<dbReference type="Pfam" id="PF00069">
    <property type="entry name" value="Pkinase"/>
    <property type="match status" value="1"/>
</dbReference>
<dbReference type="SMART" id="SM00220">
    <property type="entry name" value="S_TKc"/>
    <property type="match status" value="1"/>
</dbReference>
<dbReference type="SUPFAM" id="SSF56112">
    <property type="entry name" value="Protein kinase-like (PK-like)"/>
    <property type="match status" value="1"/>
</dbReference>
<dbReference type="PROSITE" id="PS00107">
    <property type="entry name" value="PROTEIN_KINASE_ATP"/>
    <property type="match status" value="1"/>
</dbReference>
<dbReference type="PROSITE" id="PS50011">
    <property type="entry name" value="PROTEIN_KINASE_DOM"/>
    <property type="match status" value="1"/>
</dbReference>
<dbReference type="PROSITE" id="PS00108">
    <property type="entry name" value="PROTEIN_KINASE_ST"/>
    <property type="match status" value="1"/>
</dbReference>
<proteinExistence type="evidence at protein level"/>